<gene>
    <name evidence="1" type="primary">ribH</name>
    <name type="ordered locus">Bxeno_A3515</name>
    <name type="ORF">Bxe_A0892</name>
</gene>
<protein>
    <recommendedName>
        <fullName evidence="1">6,7-dimethyl-8-ribityllumazine synthase</fullName>
        <shortName evidence="1">DMRL synthase</shortName>
        <shortName evidence="1">LS</shortName>
        <shortName evidence="1">Lumazine synthase</shortName>
        <ecNumber evidence="1">2.5.1.78</ecNumber>
    </recommendedName>
</protein>
<sequence>MEIGQYQPNLDGDGLRIGIVQARFNEPVCNGLADSCIEELERLGVTGEDVLLVTVPGALEIPLALQKLAESAQFDALIALGAVIRGETYHFELVSNESGAGITRIGLDFGIPVANAVLTTENDEQAVARMTEKGRDAARVAVEMANLAVALEQLGGDDDEEEDEEEEA</sequence>
<accession>Q13V36</accession>
<name>RISB_PARXL</name>
<reference key="1">
    <citation type="journal article" date="2006" name="Proc. Natl. Acad. Sci. U.S.A.">
        <title>Burkholderia xenovorans LB400 harbors a multi-replicon, 9.73-Mbp genome shaped for versatility.</title>
        <authorList>
            <person name="Chain P.S.G."/>
            <person name="Denef V.J."/>
            <person name="Konstantinidis K.T."/>
            <person name="Vergez L.M."/>
            <person name="Agullo L."/>
            <person name="Reyes V.L."/>
            <person name="Hauser L."/>
            <person name="Cordova M."/>
            <person name="Gomez L."/>
            <person name="Gonzalez M."/>
            <person name="Land M."/>
            <person name="Lao V."/>
            <person name="Larimer F."/>
            <person name="LiPuma J.J."/>
            <person name="Mahenthiralingam E."/>
            <person name="Malfatti S.A."/>
            <person name="Marx C.J."/>
            <person name="Parnell J.J."/>
            <person name="Ramette A."/>
            <person name="Richardson P."/>
            <person name="Seeger M."/>
            <person name="Smith D."/>
            <person name="Spilker T."/>
            <person name="Sul W.J."/>
            <person name="Tsoi T.V."/>
            <person name="Ulrich L.E."/>
            <person name="Zhulin I.B."/>
            <person name="Tiedje J.M."/>
        </authorList>
    </citation>
    <scope>NUCLEOTIDE SEQUENCE [LARGE SCALE GENOMIC DNA]</scope>
    <source>
        <strain>LB400</strain>
    </source>
</reference>
<organism>
    <name type="scientific">Paraburkholderia xenovorans (strain LB400)</name>
    <dbReference type="NCBI Taxonomy" id="266265"/>
    <lineage>
        <taxon>Bacteria</taxon>
        <taxon>Pseudomonadati</taxon>
        <taxon>Pseudomonadota</taxon>
        <taxon>Betaproteobacteria</taxon>
        <taxon>Burkholderiales</taxon>
        <taxon>Burkholderiaceae</taxon>
        <taxon>Paraburkholderia</taxon>
    </lineage>
</organism>
<keyword id="KW-1185">Reference proteome</keyword>
<keyword id="KW-0686">Riboflavin biosynthesis</keyword>
<keyword id="KW-0808">Transferase</keyword>
<proteinExistence type="inferred from homology"/>
<feature type="chain" id="PRO_1000040387" description="6,7-dimethyl-8-ribityllumazine synthase">
    <location>
        <begin position="1"/>
        <end position="168"/>
    </location>
</feature>
<feature type="active site" description="Proton donor" evidence="1">
    <location>
        <position position="90"/>
    </location>
</feature>
<feature type="binding site" evidence="1">
    <location>
        <position position="24"/>
    </location>
    <ligand>
        <name>5-amino-6-(D-ribitylamino)uracil</name>
        <dbReference type="ChEBI" id="CHEBI:15934"/>
    </ligand>
</feature>
<feature type="binding site" evidence="1">
    <location>
        <begin position="58"/>
        <end position="60"/>
    </location>
    <ligand>
        <name>5-amino-6-(D-ribitylamino)uracil</name>
        <dbReference type="ChEBI" id="CHEBI:15934"/>
    </ligand>
</feature>
<feature type="binding site" evidence="1">
    <location>
        <begin position="82"/>
        <end position="84"/>
    </location>
    <ligand>
        <name>5-amino-6-(D-ribitylamino)uracil</name>
        <dbReference type="ChEBI" id="CHEBI:15934"/>
    </ligand>
</feature>
<feature type="binding site" evidence="1">
    <location>
        <begin position="87"/>
        <end position="88"/>
    </location>
    <ligand>
        <name>(2S)-2-hydroxy-3-oxobutyl phosphate</name>
        <dbReference type="ChEBI" id="CHEBI:58830"/>
    </ligand>
</feature>
<feature type="binding site" evidence="1">
    <location>
        <position position="115"/>
    </location>
    <ligand>
        <name>5-amino-6-(D-ribitylamino)uracil</name>
        <dbReference type="ChEBI" id="CHEBI:15934"/>
    </ligand>
</feature>
<feature type="binding site" evidence="1">
    <location>
        <position position="129"/>
    </location>
    <ligand>
        <name>(2S)-2-hydroxy-3-oxobutyl phosphate</name>
        <dbReference type="ChEBI" id="CHEBI:58830"/>
    </ligand>
</feature>
<evidence type="ECO:0000255" key="1">
    <source>
        <dbReference type="HAMAP-Rule" id="MF_00178"/>
    </source>
</evidence>
<dbReference type="EC" id="2.5.1.78" evidence="1"/>
<dbReference type="EMBL" id="CP000270">
    <property type="protein sequence ID" value="ABE32053.1"/>
    <property type="molecule type" value="Genomic_DNA"/>
</dbReference>
<dbReference type="RefSeq" id="WP_011489560.1">
    <property type="nucleotide sequence ID" value="NZ_CP008760.1"/>
</dbReference>
<dbReference type="SMR" id="Q13V36"/>
<dbReference type="STRING" id="266265.Bxe_A0892"/>
<dbReference type="KEGG" id="bxb:DR64_3053"/>
<dbReference type="KEGG" id="bxe:Bxe_A0892"/>
<dbReference type="PATRIC" id="fig|266265.5.peg.3693"/>
<dbReference type="eggNOG" id="COG0054">
    <property type="taxonomic scope" value="Bacteria"/>
</dbReference>
<dbReference type="OrthoDB" id="9809709at2"/>
<dbReference type="UniPathway" id="UPA00275">
    <property type="reaction ID" value="UER00404"/>
</dbReference>
<dbReference type="Proteomes" id="UP000001817">
    <property type="component" value="Chromosome 1"/>
</dbReference>
<dbReference type="GO" id="GO:0005829">
    <property type="term" value="C:cytosol"/>
    <property type="evidence" value="ECO:0007669"/>
    <property type="project" value="TreeGrafter"/>
</dbReference>
<dbReference type="GO" id="GO:0009349">
    <property type="term" value="C:riboflavin synthase complex"/>
    <property type="evidence" value="ECO:0007669"/>
    <property type="project" value="InterPro"/>
</dbReference>
<dbReference type="GO" id="GO:0000906">
    <property type="term" value="F:6,7-dimethyl-8-ribityllumazine synthase activity"/>
    <property type="evidence" value="ECO:0007669"/>
    <property type="project" value="UniProtKB-UniRule"/>
</dbReference>
<dbReference type="GO" id="GO:0009231">
    <property type="term" value="P:riboflavin biosynthetic process"/>
    <property type="evidence" value="ECO:0007669"/>
    <property type="project" value="UniProtKB-UniRule"/>
</dbReference>
<dbReference type="CDD" id="cd09209">
    <property type="entry name" value="Lumazine_synthase-I"/>
    <property type="match status" value="1"/>
</dbReference>
<dbReference type="Gene3D" id="3.40.50.960">
    <property type="entry name" value="Lumazine/riboflavin synthase"/>
    <property type="match status" value="1"/>
</dbReference>
<dbReference type="HAMAP" id="MF_00178">
    <property type="entry name" value="Lumazine_synth"/>
    <property type="match status" value="1"/>
</dbReference>
<dbReference type="InterPro" id="IPR034964">
    <property type="entry name" value="LS"/>
</dbReference>
<dbReference type="InterPro" id="IPR002180">
    <property type="entry name" value="LS/RS"/>
</dbReference>
<dbReference type="InterPro" id="IPR036467">
    <property type="entry name" value="LS/RS_sf"/>
</dbReference>
<dbReference type="NCBIfam" id="TIGR00114">
    <property type="entry name" value="lumazine-synth"/>
    <property type="match status" value="1"/>
</dbReference>
<dbReference type="PANTHER" id="PTHR21058:SF0">
    <property type="entry name" value="6,7-DIMETHYL-8-RIBITYLLUMAZINE SYNTHASE"/>
    <property type="match status" value="1"/>
</dbReference>
<dbReference type="PANTHER" id="PTHR21058">
    <property type="entry name" value="6,7-DIMETHYL-8-RIBITYLLUMAZINE SYNTHASE DMRL SYNTHASE LUMAZINE SYNTHASE"/>
    <property type="match status" value="1"/>
</dbReference>
<dbReference type="Pfam" id="PF00885">
    <property type="entry name" value="DMRL_synthase"/>
    <property type="match status" value="1"/>
</dbReference>
<dbReference type="SUPFAM" id="SSF52121">
    <property type="entry name" value="Lumazine synthase"/>
    <property type="match status" value="1"/>
</dbReference>
<comment type="function">
    <text evidence="1">Catalyzes the formation of 6,7-dimethyl-8-ribityllumazine by condensation of 5-amino-6-(D-ribitylamino)uracil with 3,4-dihydroxy-2-butanone 4-phosphate. This is the penultimate step in the biosynthesis of riboflavin.</text>
</comment>
<comment type="catalytic activity">
    <reaction evidence="1">
        <text>(2S)-2-hydroxy-3-oxobutyl phosphate + 5-amino-6-(D-ribitylamino)uracil = 6,7-dimethyl-8-(1-D-ribityl)lumazine + phosphate + 2 H2O + H(+)</text>
        <dbReference type="Rhea" id="RHEA:26152"/>
        <dbReference type="ChEBI" id="CHEBI:15377"/>
        <dbReference type="ChEBI" id="CHEBI:15378"/>
        <dbReference type="ChEBI" id="CHEBI:15934"/>
        <dbReference type="ChEBI" id="CHEBI:43474"/>
        <dbReference type="ChEBI" id="CHEBI:58201"/>
        <dbReference type="ChEBI" id="CHEBI:58830"/>
        <dbReference type="EC" id="2.5.1.78"/>
    </reaction>
</comment>
<comment type="pathway">
    <text evidence="1">Cofactor biosynthesis; riboflavin biosynthesis; riboflavin from 2-hydroxy-3-oxobutyl phosphate and 5-amino-6-(D-ribitylamino)uracil: step 1/2.</text>
</comment>
<comment type="similarity">
    <text evidence="1">Belongs to the DMRL synthase family.</text>
</comment>